<gene>
    <name evidence="1" type="primary">pcn</name>
    <name type="synonym">pcnA</name>
</gene>
<protein>
    <recommendedName>
        <fullName evidence="1">DNA polymerase sliding clamp</fullName>
    </recommendedName>
    <alternativeName>
        <fullName evidence="1">Proliferating cell nuclear antigen homolog</fullName>
        <shortName evidence="1">PCNA</shortName>
    </alternativeName>
    <alternativeName>
        <fullName>Tfu PCNA</fullName>
    </alternativeName>
</protein>
<keyword id="KW-0235">DNA replication</keyword>
<keyword id="KW-0238">DNA-binding</keyword>
<dbReference type="EMBL" id="AJ130939">
    <property type="protein sequence ID" value="CAB59006.1"/>
    <property type="molecule type" value="Genomic_DNA"/>
</dbReference>
<dbReference type="SMR" id="Q9UWR9"/>
<dbReference type="GO" id="GO:0003677">
    <property type="term" value="F:DNA binding"/>
    <property type="evidence" value="ECO:0007669"/>
    <property type="project" value="UniProtKB-UniRule"/>
</dbReference>
<dbReference type="GO" id="GO:0030337">
    <property type="term" value="F:DNA polymerase processivity factor activity"/>
    <property type="evidence" value="ECO:0007669"/>
    <property type="project" value="UniProtKB-UniRule"/>
</dbReference>
<dbReference type="GO" id="GO:0006272">
    <property type="term" value="P:leading strand elongation"/>
    <property type="evidence" value="ECO:0007669"/>
    <property type="project" value="TreeGrafter"/>
</dbReference>
<dbReference type="GO" id="GO:0006275">
    <property type="term" value="P:regulation of DNA replication"/>
    <property type="evidence" value="ECO:0007669"/>
    <property type="project" value="UniProtKB-UniRule"/>
</dbReference>
<dbReference type="CDD" id="cd00577">
    <property type="entry name" value="PCNA"/>
    <property type="match status" value="1"/>
</dbReference>
<dbReference type="FunFam" id="3.70.10.10:FF:000038">
    <property type="entry name" value="DNA polymerase sliding clamp 1"/>
    <property type="match status" value="1"/>
</dbReference>
<dbReference type="Gene3D" id="3.70.10.10">
    <property type="match status" value="1"/>
</dbReference>
<dbReference type="HAMAP" id="MF_00317">
    <property type="entry name" value="DNApol_clamp_arch"/>
    <property type="match status" value="1"/>
</dbReference>
<dbReference type="InterPro" id="IPR046938">
    <property type="entry name" value="DNA_clamp_sf"/>
</dbReference>
<dbReference type="InterPro" id="IPR000730">
    <property type="entry name" value="Pr_cel_nuc_antig"/>
</dbReference>
<dbReference type="InterPro" id="IPR022649">
    <property type="entry name" value="Pr_cel_nuc_antig_C"/>
</dbReference>
<dbReference type="InterPro" id="IPR022659">
    <property type="entry name" value="Pr_cel_nuc_antig_CS"/>
</dbReference>
<dbReference type="InterPro" id="IPR022648">
    <property type="entry name" value="Pr_cel_nuc_antig_N"/>
</dbReference>
<dbReference type="NCBIfam" id="TIGR00590">
    <property type="entry name" value="pcna"/>
    <property type="match status" value="1"/>
</dbReference>
<dbReference type="NCBIfam" id="NF002219">
    <property type="entry name" value="PRK01115.1-2"/>
    <property type="match status" value="1"/>
</dbReference>
<dbReference type="NCBIfam" id="NF002221">
    <property type="entry name" value="PRK01115.1-4"/>
    <property type="match status" value="1"/>
</dbReference>
<dbReference type="PANTHER" id="PTHR11352">
    <property type="entry name" value="PROLIFERATING CELL NUCLEAR ANTIGEN"/>
    <property type="match status" value="1"/>
</dbReference>
<dbReference type="PANTHER" id="PTHR11352:SF0">
    <property type="entry name" value="PROLIFERATING CELL NUCLEAR ANTIGEN"/>
    <property type="match status" value="1"/>
</dbReference>
<dbReference type="Pfam" id="PF02747">
    <property type="entry name" value="PCNA_C"/>
    <property type="match status" value="1"/>
</dbReference>
<dbReference type="Pfam" id="PF00705">
    <property type="entry name" value="PCNA_N"/>
    <property type="match status" value="1"/>
</dbReference>
<dbReference type="PRINTS" id="PR00339">
    <property type="entry name" value="PCNACYCLIN"/>
</dbReference>
<dbReference type="SUPFAM" id="SSF55979">
    <property type="entry name" value="DNA clamp"/>
    <property type="match status" value="2"/>
</dbReference>
<dbReference type="PROSITE" id="PS01251">
    <property type="entry name" value="PCNA_1"/>
    <property type="match status" value="1"/>
</dbReference>
<sequence length="249" mass="28043">MPFEIVFDGAKEFADLIATASNLIDEAAFKVTDEGISMRAMDPSRVVLIDLNLPESIFSKYEVEEEETIGINMDHFKKILKRGKGKDTLILKKGDENFLEITFEGTAKRTFRLPLIDVEELELDLPELPFTAKVVLLGEVLKEAVKDASLVSDAMKFIAKENEFSMRAEGETNEVEIKLTLEDEGLLDIEVEEETKSAYGISYLADMVKGIGKADEVTIRFGNEMPLQMDYFIRDEGKLTFLLAPRVED</sequence>
<feature type="chain" id="PRO_0000149221" description="DNA polymerase sliding clamp">
    <location>
        <begin position="1"/>
        <end position="249"/>
    </location>
</feature>
<accession>Q9UWR9</accession>
<name>PCNA_THEFM</name>
<comment type="function">
    <text evidence="1">Sliding clamp subunit that acts as a moving platform for DNA processing. Responsible for tethering the catalytic subunit of DNA polymerase and other proteins to DNA during high-speed replication.</text>
</comment>
<comment type="subunit">
    <text evidence="1">Homotrimer. The subunits circularize to form a toroid; DNA passes through its center. Replication factor C (RFC) is required to load the toroid on the DNA.</text>
</comment>
<comment type="similarity">
    <text evidence="1">Belongs to the PCNA family.</text>
</comment>
<evidence type="ECO:0000255" key="1">
    <source>
        <dbReference type="HAMAP-Rule" id="MF_00317"/>
    </source>
</evidence>
<proteinExistence type="inferred from homology"/>
<organism>
    <name type="scientific">Thermococcus fumicolans</name>
    <dbReference type="NCBI Taxonomy" id="46540"/>
    <lineage>
        <taxon>Archaea</taxon>
        <taxon>Methanobacteriati</taxon>
        <taxon>Methanobacteriota</taxon>
        <taxon>Thermococci</taxon>
        <taxon>Thermococcales</taxon>
        <taxon>Thermococcaceae</taxon>
        <taxon>Thermococcus</taxon>
    </lineage>
</organism>
<reference key="1">
    <citation type="journal article" date="2000" name="Biochem. Biophys. Res. Commun.">
        <title>The PCNA from Thermococcus fumicolans functionally interacts with DNA polymerase delta.</title>
        <authorList>
            <person name="Henneke G."/>
            <person name="Raffin J.P."/>
            <person name="Ferrari E."/>
            <person name="Jonsson Z.O."/>
            <person name="Dietrich J."/>
            <person name="Hubscher U."/>
        </authorList>
    </citation>
    <scope>NUCLEOTIDE SEQUENCE [GENOMIC DNA]</scope>
</reference>